<feature type="chain" id="PRO_1000007686" description="DNA-directed RNA polymerase subunit alpha">
    <location>
        <begin position="1"/>
        <end position="315"/>
    </location>
</feature>
<feature type="region of interest" description="Alpha N-terminal domain (alpha-NTD)" evidence="1">
    <location>
        <begin position="1"/>
        <end position="228"/>
    </location>
</feature>
<feature type="region of interest" description="Alpha C-terminal domain (alpha-CTD)" evidence="1">
    <location>
        <begin position="245"/>
        <end position="315"/>
    </location>
</feature>
<gene>
    <name evidence="1" type="primary">rpoA</name>
    <name type="ordered locus">CLI_3634</name>
</gene>
<organism>
    <name type="scientific">Clostridium botulinum (strain Langeland / NCTC 10281 / Type F)</name>
    <dbReference type="NCBI Taxonomy" id="441772"/>
    <lineage>
        <taxon>Bacteria</taxon>
        <taxon>Bacillati</taxon>
        <taxon>Bacillota</taxon>
        <taxon>Clostridia</taxon>
        <taxon>Eubacteriales</taxon>
        <taxon>Clostridiaceae</taxon>
        <taxon>Clostridium</taxon>
    </lineage>
</organism>
<protein>
    <recommendedName>
        <fullName evidence="1">DNA-directed RNA polymerase subunit alpha</fullName>
        <shortName evidence="1">RNAP subunit alpha</shortName>
        <ecNumber evidence="1">2.7.7.6</ecNumber>
    </recommendedName>
    <alternativeName>
        <fullName evidence="1">RNA polymerase subunit alpha</fullName>
    </alternativeName>
    <alternativeName>
        <fullName evidence="1">Transcriptase subunit alpha</fullName>
    </alternativeName>
</protein>
<accession>A7GJ45</accession>
<dbReference type="EC" id="2.7.7.6" evidence="1"/>
<dbReference type="EMBL" id="CP000728">
    <property type="protein sequence ID" value="ABS42252.1"/>
    <property type="molecule type" value="Genomic_DNA"/>
</dbReference>
<dbReference type="RefSeq" id="WP_003357472.1">
    <property type="nucleotide sequence ID" value="NC_009699.1"/>
</dbReference>
<dbReference type="SMR" id="A7GJ45"/>
<dbReference type="KEGG" id="cbf:CLI_3634"/>
<dbReference type="HOGENOM" id="CLU_053084_0_1_9"/>
<dbReference type="Proteomes" id="UP000002410">
    <property type="component" value="Chromosome"/>
</dbReference>
<dbReference type="GO" id="GO:0005737">
    <property type="term" value="C:cytoplasm"/>
    <property type="evidence" value="ECO:0007669"/>
    <property type="project" value="UniProtKB-ARBA"/>
</dbReference>
<dbReference type="GO" id="GO:0000428">
    <property type="term" value="C:DNA-directed RNA polymerase complex"/>
    <property type="evidence" value="ECO:0007669"/>
    <property type="project" value="UniProtKB-KW"/>
</dbReference>
<dbReference type="GO" id="GO:0003677">
    <property type="term" value="F:DNA binding"/>
    <property type="evidence" value="ECO:0007669"/>
    <property type="project" value="UniProtKB-UniRule"/>
</dbReference>
<dbReference type="GO" id="GO:0003899">
    <property type="term" value="F:DNA-directed RNA polymerase activity"/>
    <property type="evidence" value="ECO:0007669"/>
    <property type="project" value="UniProtKB-UniRule"/>
</dbReference>
<dbReference type="GO" id="GO:0046983">
    <property type="term" value="F:protein dimerization activity"/>
    <property type="evidence" value="ECO:0007669"/>
    <property type="project" value="InterPro"/>
</dbReference>
<dbReference type="GO" id="GO:0006351">
    <property type="term" value="P:DNA-templated transcription"/>
    <property type="evidence" value="ECO:0007669"/>
    <property type="project" value="UniProtKB-UniRule"/>
</dbReference>
<dbReference type="CDD" id="cd06928">
    <property type="entry name" value="RNAP_alpha_NTD"/>
    <property type="match status" value="1"/>
</dbReference>
<dbReference type="FunFam" id="1.10.150.20:FF:000001">
    <property type="entry name" value="DNA-directed RNA polymerase subunit alpha"/>
    <property type="match status" value="1"/>
</dbReference>
<dbReference type="FunFam" id="2.170.120.12:FF:000001">
    <property type="entry name" value="DNA-directed RNA polymerase subunit alpha"/>
    <property type="match status" value="1"/>
</dbReference>
<dbReference type="Gene3D" id="1.10.150.20">
    <property type="entry name" value="5' to 3' exonuclease, C-terminal subdomain"/>
    <property type="match status" value="1"/>
</dbReference>
<dbReference type="Gene3D" id="2.170.120.12">
    <property type="entry name" value="DNA-directed RNA polymerase, insert domain"/>
    <property type="match status" value="1"/>
</dbReference>
<dbReference type="Gene3D" id="3.30.1360.10">
    <property type="entry name" value="RNA polymerase, RBP11-like subunit"/>
    <property type="match status" value="1"/>
</dbReference>
<dbReference type="HAMAP" id="MF_00059">
    <property type="entry name" value="RNApol_bact_RpoA"/>
    <property type="match status" value="1"/>
</dbReference>
<dbReference type="InterPro" id="IPR011262">
    <property type="entry name" value="DNA-dir_RNA_pol_insert"/>
</dbReference>
<dbReference type="InterPro" id="IPR011263">
    <property type="entry name" value="DNA-dir_RNA_pol_RpoA/D/Rpb3"/>
</dbReference>
<dbReference type="InterPro" id="IPR011773">
    <property type="entry name" value="DNA-dir_RpoA"/>
</dbReference>
<dbReference type="InterPro" id="IPR036603">
    <property type="entry name" value="RBP11-like"/>
</dbReference>
<dbReference type="InterPro" id="IPR011260">
    <property type="entry name" value="RNAP_asu_C"/>
</dbReference>
<dbReference type="InterPro" id="IPR036643">
    <property type="entry name" value="RNApol_insert_sf"/>
</dbReference>
<dbReference type="NCBIfam" id="NF003513">
    <property type="entry name" value="PRK05182.1-2"/>
    <property type="match status" value="1"/>
</dbReference>
<dbReference type="NCBIfam" id="NF003515">
    <property type="entry name" value="PRK05182.2-1"/>
    <property type="match status" value="1"/>
</dbReference>
<dbReference type="NCBIfam" id="NF003516">
    <property type="entry name" value="PRK05182.2-2"/>
    <property type="match status" value="1"/>
</dbReference>
<dbReference type="NCBIfam" id="NF003519">
    <property type="entry name" value="PRK05182.2-5"/>
    <property type="match status" value="1"/>
</dbReference>
<dbReference type="NCBIfam" id="TIGR02027">
    <property type="entry name" value="rpoA"/>
    <property type="match status" value="1"/>
</dbReference>
<dbReference type="Pfam" id="PF01000">
    <property type="entry name" value="RNA_pol_A_bac"/>
    <property type="match status" value="1"/>
</dbReference>
<dbReference type="Pfam" id="PF03118">
    <property type="entry name" value="RNA_pol_A_CTD"/>
    <property type="match status" value="1"/>
</dbReference>
<dbReference type="Pfam" id="PF01193">
    <property type="entry name" value="RNA_pol_L"/>
    <property type="match status" value="1"/>
</dbReference>
<dbReference type="SMART" id="SM00662">
    <property type="entry name" value="RPOLD"/>
    <property type="match status" value="1"/>
</dbReference>
<dbReference type="SUPFAM" id="SSF47789">
    <property type="entry name" value="C-terminal domain of RNA polymerase alpha subunit"/>
    <property type="match status" value="1"/>
</dbReference>
<dbReference type="SUPFAM" id="SSF56553">
    <property type="entry name" value="Insert subdomain of RNA polymerase alpha subunit"/>
    <property type="match status" value="1"/>
</dbReference>
<dbReference type="SUPFAM" id="SSF55257">
    <property type="entry name" value="RBP11-like subunits of RNA polymerase"/>
    <property type="match status" value="1"/>
</dbReference>
<comment type="function">
    <text evidence="1">DNA-dependent RNA polymerase catalyzes the transcription of DNA into RNA using the four ribonucleoside triphosphates as substrates.</text>
</comment>
<comment type="catalytic activity">
    <reaction evidence="1">
        <text>RNA(n) + a ribonucleoside 5'-triphosphate = RNA(n+1) + diphosphate</text>
        <dbReference type="Rhea" id="RHEA:21248"/>
        <dbReference type="Rhea" id="RHEA-COMP:14527"/>
        <dbReference type="Rhea" id="RHEA-COMP:17342"/>
        <dbReference type="ChEBI" id="CHEBI:33019"/>
        <dbReference type="ChEBI" id="CHEBI:61557"/>
        <dbReference type="ChEBI" id="CHEBI:140395"/>
        <dbReference type="EC" id="2.7.7.6"/>
    </reaction>
</comment>
<comment type="subunit">
    <text evidence="1">Homodimer. The RNAP catalytic core consists of 2 alpha, 1 beta, 1 beta' and 1 omega subunit. When a sigma factor is associated with the core the holoenzyme is formed, which can initiate transcription.</text>
</comment>
<comment type="domain">
    <text evidence="1">The N-terminal domain is essential for RNAP assembly and basal transcription, whereas the C-terminal domain is involved in interaction with transcriptional regulators and with upstream promoter elements.</text>
</comment>
<comment type="similarity">
    <text evidence="1">Belongs to the RNA polymerase alpha chain family.</text>
</comment>
<name>RPOA_CLOBL</name>
<sequence>MLEIEKPKIECVENAEDGSYGKFVIEPLERGYGITLGNALRRILLSSLPGVAADHIKIDSVLHEFSTVQGVKEDVTELILNIKCLALTMNGEGPKTIYIDEVGPKEVTAADIKTDGDVEVINKDLHIATLDENGKMYMEINVNRGRGYVTQNKNKTKDMPIGSIAVDSIYTPVKRVNFSVENTRVGQITDYDKLTIEVWTNGTIRPEEAVSLSAKILIEHFKLFMTLTDHADDMEIMVEKEEDKKEKVLEMTIEELDLSVRSYNCLKRAGINTVQELCERSMDDMMKVRNLGKKSLEEVEQKLEALGLGLRKSED</sequence>
<keyword id="KW-0240">DNA-directed RNA polymerase</keyword>
<keyword id="KW-0548">Nucleotidyltransferase</keyword>
<keyword id="KW-0804">Transcription</keyword>
<keyword id="KW-0808">Transferase</keyword>
<proteinExistence type="inferred from homology"/>
<evidence type="ECO:0000255" key="1">
    <source>
        <dbReference type="HAMAP-Rule" id="MF_00059"/>
    </source>
</evidence>
<reference key="1">
    <citation type="submission" date="2007-06" db="EMBL/GenBank/DDBJ databases">
        <authorList>
            <person name="Brinkac L.M."/>
            <person name="Daugherty S."/>
            <person name="Dodson R.J."/>
            <person name="Madupu R."/>
            <person name="Brown J.L."/>
            <person name="Bruce D."/>
            <person name="Detter C."/>
            <person name="Munk C."/>
            <person name="Smith L.A."/>
            <person name="Smith T.J."/>
            <person name="White O."/>
            <person name="Brettin T.S."/>
        </authorList>
    </citation>
    <scope>NUCLEOTIDE SEQUENCE [LARGE SCALE GENOMIC DNA]</scope>
    <source>
        <strain>Langeland / NCTC 10281 / Type F</strain>
    </source>
</reference>